<organism>
    <name type="scientific">Mus musculus</name>
    <name type="common">Mouse</name>
    <dbReference type="NCBI Taxonomy" id="10090"/>
    <lineage>
        <taxon>Eukaryota</taxon>
        <taxon>Metazoa</taxon>
        <taxon>Chordata</taxon>
        <taxon>Craniata</taxon>
        <taxon>Vertebrata</taxon>
        <taxon>Euteleostomi</taxon>
        <taxon>Mammalia</taxon>
        <taxon>Eutheria</taxon>
        <taxon>Euarchontoglires</taxon>
        <taxon>Glires</taxon>
        <taxon>Rodentia</taxon>
        <taxon>Myomorpha</taxon>
        <taxon>Muroidea</taxon>
        <taxon>Muridae</taxon>
        <taxon>Murinae</taxon>
        <taxon>Mus</taxon>
        <taxon>Mus</taxon>
    </lineage>
</organism>
<comment type="function">
    <text evidence="1 6 8 9 10 11 13 14">Transcription factor that binds to DNA at the consensus sequence 5'-AACAAT-3' (PubMed:9421502, PubMed:9524265). Binds to the proximal promoter region of the myelin protein MPZ gene, and may thereby be involved in the differentiation of oligodendroglia in the developing spinal tube (PubMed:26525805). Binds to the gene promoter of MBP and acts as a transcriptional repressor (PubMed:26525805). Binds to and modifies the activity of TCF7/TCF1, thereby inhibiting transcription and modulates normal gamma-delta T-cell development and differentiation of IL17A expressing gamma-delta T-cells (PubMed:17218525, PubMed:23562159, PubMed:30413363). Required for the differentiation of Vgamma2-positive gamma-delta T-cells, a subset of IL17A expressing gamma-delta T-cells (PubMed:23562159). Regulates expression of BLK in the differentiation of IL17A expressing gamma-delta T-cells (PubMed:23562159). Promotes brown adipocyte differentiation (PubMed:27923061). Inhibitor of WNT signaling (By similarity).</text>
</comment>
<comment type="subunit">
    <text evidence="1 6 7">Homodimer; homodimerization reduces DNA binding efficiency (By similarity). Interacts with isoform 2 of TCF7/TCF1 (via N-terminus); inhibits WNT-mediated transcriptional activity (PubMed:17218525). Interacts with HHEX (via N-terminus); abolishes the SOX13-mediated inhibition of WNT-mediated transcriptional activity via competitive inhibition of the SOX13-TCF7 complex (PubMed:20028982).</text>
</comment>
<comment type="subcellular location">
    <subcellularLocation>
        <location evidence="2 4 5 9 13">Nucleus</location>
    </subcellularLocation>
    <subcellularLocation>
        <location evidence="4">Cytoplasm</location>
    </subcellularLocation>
</comment>
<comment type="tissue specificity">
    <text evidence="4 6 8 9 11 14">Expressed in beta-cells in pancreatic islets of Langerhans (at protein level) (PubMed:10871192). Expressed in a subset of invariant natural killer (iNK) T-cells (at protein level) (PubMed:30413363). Expressed in oligodendroglial cells in the spinal cord (at protein level) (PubMed:26525805). In the hematopoietic system, expressed in gamma-delta T-cell lineage, specifically in immature Vgamma2-positive gamma-delta thymocytes, with expression decreasing upon maturation (PubMed:17218525, PubMed:23562159, PubMed:30413363). Expressed in DN1d cells, a subset of DN1 (TCR, CD4 and CD8 negative, also known as TN1) thymocyte progenitors, and in DN2 (also known as TN2) thymocyte progenitors (PubMed:17218525, PubMed:30413363). Expressed in the ovary and kidney (PubMed:9524265). Expressed in the peripheral lymphoid organs (PubMed:17218525).</text>
</comment>
<comment type="developmental stage">
    <text evidence="5 9 10 11 12 13">Expressed in the visceral mesoderm of the yolk sac from 9.5 dpc to 15.5 dpc (at protein level) (PubMed:16835393, PubMed:30413363). Expressed in the sclerotome of developing somites and the derivative vertebrae and ribs between 9.5 dpc and 12.5 dpc (PubMed:16835393). Expressed in the rostral perichondrial area and mesenchyme of the limb bud in the prospective arm region and hand plate at 10.5 dpc, proximal mesenchyme expression in the forelimb then decreases between 11.5 dpc and 12.5 dpc until expression is consolidated to the arm regions of the developing limb at 12.5 dpc and forelimb digits at 13.5 dpc (PubMed:16835393). Expressed at variable levels in the prospective forebrain to the hindbrain and all neural tube cell layers from 9.5 dpc to postnatal day 6 (P6) (PubMed:16835393, PubMed:26525805). Expressed in immature oligodendrocyte precursor cells and astrocytes at 15.5 dpc, additionally expressed in precursor and differentiating oligodendrocytes in the neural tube from 18.5 dpc to P6 (PubMed:26525805). Highly expressed in embryonic arterial walls at 13.5 dpc (PubMed:9421502). Low levels are found in the inner ear at 13.5 dpc and in some cells in the thymus at 16.5 dpc (PubMed:9421502). Initially expressed in the hair follicles of the whisker pad vibrissae at 14.5 dpc, expression continues in the hair placode and in hair germ and peg during hair follicle morphogenesis to 18 dpc (PubMed:30638933, PubMed:9421502). Expressed in the newborn hair follicle epithelial sheath, this expression weakens at P15, reexpressed in the hair follicle bulge and secondary germ regions at P22, with expression continuing in the root sheath of the hair follicle at P28 (PubMed:30638933). Expressed in trophoblast giant cells of the spongiotrophoblast and labyrinth layers of the placenta at 15.5 dpc (PubMed:16835393). Expressed in DN1d cells, a subset of DN1 precursor thymocytes, from 16 dpc onwards (PubMed:30413363). Expressed in the tracheal epithelium below the vocal cord at 18 dpc (PubMed:9421502). Expression is transiently increased during brown adipocyte differentiation (PubMed:27923061).</text>
</comment>
<comment type="disruption phenotype">
    <text evidence="6 8 9 11 12">Mice show severe growth abnormalities (PubMed:17218525). Severe reduction in the number of Rorc and Vgamma2-positive mature thymocytes in fetal and adult mice caused by the loss of Blk expression in Vgamma2-positive immature thymocytes (PubMed:23562159). This results in a severe reduction of Il17a-producing Vgamma2-positive gamma-delta T-cells in the spleen, lymph nodes and dermis (PubMed:17218525, PubMed:23562159). In addition, the number of Vgamma4-positive thymocytes in the fetal thymus is transiently reduced, with levels returning to normal in neonatal and adult mice (PubMed:23562159). Proliferation of CD3, CD4, and CD8-negative (triple negative) thymocytes and gamma-delta thymocytes is increased (PubMed:17218525). Double knockout of Sox13 and Tcf7/Tcf1 shows a reduced number of DN1d cells (PubMed:30413363). No defects in oligodendrocyte precursor cells specification and in their differentiation into myelinating oligodendrocytes (PubMed:26525805). However, in Sox13 and Sox6 double knockout mice, causes a slight increase in the number of prematurely differentiated oligodendrocytes in the spinal tube compared to Sox6 knockout mice (PubMed:26525805). No defects in the integumentary system morphology and in hair development (PubMed:30638933).</text>
</comment>
<comment type="sequence caution" evidence="15">
    <conflict type="erroneous initiation">
        <sequence resource="EMBL-CDS" id="AAH07130"/>
    </conflict>
</comment>
<comment type="sequence caution" evidence="15">
    <conflict type="erroneous initiation">
        <sequence resource="EMBL-CDS" id="BAA25786"/>
    </conflict>
</comment>
<comment type="sequence caution" evidence="15">
    <conflict type="miscellaneous discrepancy">
        <sequence resource="EMBL-CDS" id="CAA04278"/>
    </conflict>
    <text>Several frameshifts.</text>
</comment>
<dbReference type="EMBL" id="BC007130">
    <property type="protein sequence ID" value="AAH07130.1"/>
    <property type="status" value="ALT_INIT"/>
    <property type="molecule type" value="mRNA"/>
</dbReference>
<dbReference type="EMBL" id="AB006329">
    <property type="protein sequence ID" value="BAA25786.1"/>
    <property type="status" value="ALT_INIT"/>
    <property type="molecule type" value="mRNA"/>
</dbReference>
<dbReference type="EMBL" id="AJ000740">
    <property type="protein sequence ID" value="CAA04278.1"/>
    <property type="status" value="ALT_SEQ"/>
    <property type="molecule type" value="mRNA"/>
</dbReference>
<dbReference type="EMBL" id="Z18962">
    <property type="protein sequence ID" value="CAA79487.1"/>
    <property type="molecule type" value="mRNA"/>
</dbReference>
<dbReference type="CCDS" id="CCDS48363.1"/>
<dbReference type="PIR" id="JC6550">
    <property type="entry name" value="JC6550"/>
</dbReference>
<dbReference type="PIR" id="S30241">
    <property type="entry name" value="S30241"/>
</dbReference>
<dbReference type="RefSeq" id="NP_001407851.1">
    <property type="nucleotide sequence ID" value="NM_001420922.1"/>
</dbReference>
<dbReference type="RefSeq" id="NP_001407852.1">
    <property type="nucleotide sequence ID" value="NM_001420923.1"/>
</dbReference>
<dbReference type="RefSeq" id="NP_035569.2">
    <property type="nucleotide sequence ID" value="NM_011439.3"/>
</dbReference>
<dbReference type="SMR" id="Q04891"/>
<dbReference type="FunCoup" id="Q04891">
    <property type="interactions" value="2512"/>
</dbReference>
<dbReference type="STRING" id="10090.ENSMUSP00000119729"/>
<dbReference type="GlyGen" id="Q04891">
    <property type="glycosylation" value="1 site, 1 O-linked glycan (1 site)"/>
</dbReference>
<dbReference type="iPTMnet" id="Q04891"/>
<dbReference type="PhosphoSitePlus" id="Q04891"/>
<dbReference type="PaxDb" id="10090-ENSMUSP00000119729"/>
<dbReference type="ProteomicsDB" id="261477"/>
<dbReference type="Antibodypedia" id="11334">
    <property type="antibodies" value="186 antibodies from 31 providers"/>
</dbReference>
<dbReference type="DNASU" id="20668"/>
<dbReference type="Ensembl" id="ENSMUST00000094551.5">
    <property type="protein sequence ID" value="ENSMUSP00000092130.5"/>
    <property type="gene ID" value="ENSMUSG00000070643.12"/>
</dbReference>
<dbReference type="Ensembl" id="ENSMUST00000153799.8">
    <property type="protein sequence ID" value="ENSMUSP00000119729.3"/>
    <property type="gene ID" value="ENSMUSG00000070643.12"/>
</dbReference>
<dbReference type="GeneID" id="20668"/>
<dbReference type="KEGG" id="mmu:20668"/>
<dbReference type="UCSC" id="uc007cqk.1">
    <property type="organism name" value="mouse"/>
</dbReference>
<dbReference type="AGR" id="MGI:98361"/>
<dbReference type="CTD" id="9580"/>
<dbReference type="MGI" id="MGI:98361">
    <property type="gene designation" value="Sox13"/>
</dbReference>
<dbReference type="VEuPathDB" id="HostDB:ENSMUSG00000070643"/>
<dbReference type="eggNOG" id="KOG0528">
    <property type="taxonomic scope" value="Eukaryota"/>
</dbReference>
<dbReference type="GeneTree" id="ENSGT00940000158759"/>
<dbReference type="InParanoid" id="Q04891"/>
<dbReference type="OMA" id="KEPCYED"/>
<dbReference type="OrthoDB" id="6247875at2759"/>
<dbReference type="PhylomeDB" id="Q04891"/>
<dbReference type="TreeFam" id="TF320471"/>
<dbReference type="Reactome" id="R-MMU-3769402">
    <property type="pathway name" value="Deactivation of the beta-catenin transactivating complex"/>
</dbReference>
<dbReference type="BioGRID-ORCS" id="20668">
    <property type="hits" value="2 hits in 78 CRISPR screens"/>
</dbReference>
<dbReference type="PRO" id="PR:Q04891"/>
<dbReference type="Proteomes" id="UP000000589">
    <property type="component" value="Chromosome 1"/>
</dbReference>
<dbReference type="RNAct" id="Q04891">
    <property type="molecule type" value="protein"/>
</dbReference>
<dbReference type="Bgee" id="ENSMUSG00000070643">
    <property type="expression patterns" value="Expressed in saccule of membranous labyrinth and 180 other cell types or tissues"/>
</dbReference>
<dbReference type="ExpressionAtlas" id="Q04891">
    <property type="expression patterns" value="baseline and differential"/>
</dbReference>
<dbReference type="GO" id="GO:0005737">
    <property type="term" value="C:cytoplasm"/>
    <property type="evidence" value="ECO:0000314"/>
    <property type="project" value="UniProtKB"/>
</dbReference>
<dbReference type="GO" id="GO:0005654">
    <property type="term" value="C:nucleoplasm"/>
    <property type="evidence" value="ECO:0007669"/>
    <property type="project" value="Ensembl"/>
</dbReference>
<dbReference type="GO" id="GO:0005634">
    <property type="term" value="C:nucleus"/>
    <property type="evidence" value="ECO:0000314"/>
    <property type="project" value="UniProtKB"/>
</dbReference>
<dbReference type="GO" id="GO:0001217">
    <property type="term" value="F:DNA-binding transcription repressor activity"/>
    <property type="evidence" value="ECO:0000314"/>
    <property type="project" value="UniProtKB"/>
</dbReference>
<dbReference type="GO" id="GO:0001227">
    <property type="term" value="F:DNA-binding transcription repressor activity, RNA polymerase II-specific"/>
    <property type="evidence" value="ECO:0000250"/>
    <property type="project" value="UniProtKB"/>
</dbReference>
<dbReference type="GO" id="GO:0042802">
    <property type="term" value="F:identical protein binding"/>
    <property type="evidence" value="ECO:0000250"/>
    <property type="project" value="UniProtKB"/>
</dbReference>
<dbReference type="GO" id="GO:0000977">
    <property type="term" value="F:RNA polymerase II transcription regulatory region sequence-specific DNA binding"/>
    <property type="evidence" value="ECO:0000314"/>
    <property type="project" value="NTNU_SB"/>
</dbReference>
<dbReference type="GO" id="GO:0043565">
    <property type="term" value="F:sequence-specific DNA binding"/>
    <property type="evidence" value="ECO:0000314"/>
    <property type="project" value="UniProtKB"/>
</dbReference>
<dbReference type="GO" id="GO:0042492">
    <property type="term" value="P:gamma-delta T cell differentiation"/>
    <property type="evidence" value="ECO:0000315"/>
    <property type="project" value="UniProtKB"/>
</dbReference>
<dbReference type="GO" id="GO:0090090">
    <property type="term" value="P:negative regulation of canonical Wnt signaling pathway"/>
    <property type="evidence" value="ECO:0000250"/>
    <property type="project" value="UniProtKB"/>
</dbReference>
<dbReference type="GO" id="GO:0090336">
    <property type="term" value="P:positive regulation of brown fat cell differentiation"/>
    <property type="evidence" value="ECO:0000315"/>
    <property type="project" value="UniProtKB"/>
</dbReference>
<dbReference type="GO" id="GO:0045588">
    <property type="term" value="P:positive regulation of gamma-delta T cell differentiation"/>
    <property type="evidence" value="ECO:0000315"/>
    <property type="project" value="UniProtKB"/>
</dbReference>
<dbReference type="GO" id="GO:0006355">
    <property type="term" value="P:regulation of DNA-templated transcription"/>
    <property type="evidence" value="ECO:0000315"/>
    <property type="project" value="UniProtKB"/>
</dbReference>
<dbReference type="GO" id="GO:0045586">
    <property type="term" value="P:regulation of gamma-delta T cell differentiation"/>
    <property type="evidence" value="ECO:0000314"/>
    <property type="project" value="MGI"/>
</dbReference>
<dbReference type="GO" id="GO:0021529">
    <property type="term" value="P:spinal cord oligodendrocyte cell differentiation"/>
    <property type="evidence" value="ECO:0000316"/>
    <property type="project" value="UniProtKB"/>
</dbReference>
<dbReference type="CDD" id="cd22030">
    <property type="entry name" value="HMG-box_SoxD"/>
    <property type="match status" value="1"/>
</dbReference>
<dbReference type="FunFam" id="1.10.30.10:FF:000003">
    <property type="entry name" value="Putative transcription factor SOX-6"/>
    <property type="match status" value="1"/>
</dbReference>
<dbReference type="Gene3D" id="1.10.30.10">
    <property type="entry name" value="High mobility group box domain"/>
    <property type="match status" value="1"/>
</dbReference>
<dbReference type="InterPro" id="IPR009071">
    <property type="entry name" value="HMG_box_dom"/>
</dbReference>
<dbReference type="InterPro" id="IPR036910">
    <property type="entry name" value="HMG_box_dom_sf"/>
</dbReference>
<dbReference type="InterPro" id="IPR051356">
    <property type="entry name" value="SOX/SOX-like_TF"/>
</dbReference>
<dbReference type="PANTHER" id="PTHR45789">
    <property type="entry name" value="FI18025P1"/>
    <property type="match status" value="1"/>
</dbReference>
<dbReference type="PANTHER" id="PTHR45789:SF4">
    <property type="entry name" value="TRANSCRIPTION FACTOR SOX-13"/>
    <property type="match status" value="1"/>
</dbReference>
<dbReference type="Pfam" id="PF00505">
    <property type="entry name" value="HMG_box"/>
    <property type="match status" value="1"/>
</dbReference>
<dbReference type="SMART" id="SM00398">
    <property type="entry name" value="HMG"/>
    <property type="match status" value="1"/>
</dbReference>
<dbReference type="SUPFAM" id="SSF47095">
    <property type="entry name" value="HMG-box"/>
    <property type="match status" value="1"/>
</dbReference>
<dbReference type="PROSITE" id="PS50118">
    <property type="entry name" value="HMG_BOX_2"/>
    <property type="match status" value="1"/>
</dbReference>
<evidence type="ECO:0000250" key="1">
    <source>
        <dbReference type="UniProtKB" id="Q9UN79"/>
    </source>
</evidence>
<evidence type="ECO:0000255" key="2">
    <source>
        <dbReference type="PROSITE-ProRule" id="PRU00267"/>
    </source>
</evidence>
<evidence type="ECO:0000256" key="3">
    <source>
        <dbReference type="SAM" id="MobiDB-lite"/>
    </source>
</evidence>
<evidence type="ECO:0000269" key="4">
    <source>
    </source>
</evidence>
<evidence type="ECO:0000269" key="5">
    <source>
    </source>
</evidence>
<evidence type="ECO:0000269" key="6">
    <source>
    </source>
</evidence>
<evidence type="ECO:0000269" key="7">
    <source>
    </source>
</evidence>
<evidence type="ECO:0000269" key="8">
    <source>
    </source>
</evidence>
<evidence type="ECO:0000269" key="9">
    <source>
    </source>
</evidence>
<evidence type="ECO:0000269" key="10">
    <source>
    </source>
</evidence>
<evidence type="ECO:0000269" key="11">
    <source>
    </source>
</evidence>
<evidence type="ECO:0000269" key="12">
    <source>
    </source>
</evidence>
<evidence type="ECO:0000269" key="13">
    <source>
    </source>
</evidence>
<evidence type="ECO:0000269" key="14">
    <source>
    </source>
</evidence>
<evidence type="ECO:0000305" key="15"/>
<name>SOX13_MOUSE</name>
<sequence length="613" mass="68168">MSMQSPVSVQLAPDSASTMVNCTIKSEEKKEPCHEAPQGAAPAVETQPGDPALASQDATNAKAPPQDCASPESSGSPEPKRPAASEAASGSQERLDFNRNLQEVVPAIEKLLSSDWKERFLGRSNVEAKDVKGTQESLAEKELQLLVMIHQLSALRDQLLTAHSEQKNMAAMLFEKQQQQMELARQQQEQIAKQQQQLIQQQHKINLLQQQIQQVNMPYVMIPAFPPSHQPLPVTPDSQLALPIQPIPCKPVEYPLQLLHSPPAPVVKRSGVAAHHPLQEPPQPLNLTAKPKVPELPNTSSSPSLKMNSCGPRPASHGAPTRDLQSSPPSLPLGFLGEGDAVTKAIQDARQLLHSHSGALENSPNTPFRKDLISLDSSPAKERLEESCVHPLEEAMLSCDMDGSRHFSESRNSSHIKRPMNAFMVWAKDERRKILQAFPDMHNSSISKILGSRWKSMTNQEKQPYYEEQARLSRQHLEKYPDYKYKPRPKRTCVVEGRRLRVGEYKALMRTRRQGARQSYTIPPQAGQAQVSSDILFPRAAGLPLARPLVEHYDPQGLDPNMPVIINTCSLREEGEGTDDRHSVADGEMYRYSEDEDSEGDEKSDEELVVLTD</sequence>
<feature type="chain" id="PRO_0000048757" description="Transcription factor SOX-13">
    <location>
        <begin position="1"/>
        <end position="613"/>
    </location>
</feature>
<feature type="DNA-binding region" description="HMG box" evidence="2">
    <location>
        <begin position="416"/>
        <end position="484"/>
    </location>
</feature>
<feature type="region of interest" description="Disordered" evidence="3">
    <location>
        <begin position="1"/>
        <end position="95"/>
    </location>
</feature>
<feature type="region of interest" description="Required for homodimerization" evidence="1">
    <location>
        <begin position="77"/>
        <end position="336"/>
    </location>
</feature>
<feature type="region of interest" description="Disordered" evidence="3">
    <location>
        <begin position="276"/>
        <end position="329"/>
    </location>
</feature>
<feature type="region of interest" description="Disordered" evidence="3">
    <location>
        <begin position="572"/>
        <end position="613"/>
    </location>
</feature>
<feature type="compositionally biased region" description="Polar residues" evidence="3">
    <location>
        <begin position="15"/>
        <end position="24"/>
    </location>
</feature>
<feature type="compositionally biased region" description="Basic and acidic residues" evidence="3">
    <location>
        <begin position="25"/>
        <end position="34"/>
    </location>
</feature>
<feature type="compositionally biased region" description="Polar residues" evidence="3">
    <location>
        <begin position="297"/>
        <end position="307"/>
    </location>
</feature>
<feature type="compositionally biased region" description="Basic and acidic residues" evidence="3">
    <location>
        <begin position="572"/>
        <end position="593"/>
    </location>
</feature>
<feature type="compositionally biased region" description="Acidic residues" evidence="3">
    <location>
        <begin position="594"/>
        <end position="613"/>
    </location>
</feature>
<feature type="modified residue" description="Phosphoserine" evidence="1">
    <location>
        <position position="327"/>
    </location>
</feature>
<feature type="modified residue" description="Phosphoserine" evidence="1">
    <location>
        <position position="374"/>
    </location>
</feature>
<feature type="modified residue" description="Phosphoserine" evidence="1">
    <location>
        <position position="377"/>
    </location>
</feature>
<feature type="modified residue" description="Phosphoserine" evidence="1">
    <location>
        <position position="378"/>
    </location>
</feature>
<feature type="modified residue" description="Phosphoserine" evidence="1">
    <location>
        <position position="604"/>
    </location>
</feature>
<feature type="sequence conflict" description="In Ref. 2; BAA25786." evidence="15" ref="2">
    <original>M</original>
    <variation>L</variation>
    <location>
        <position position="3"/>
    </location>
</feature>
<feature type="sequence conflict" description="In Ref. 1; AAH07130." evidence="15" ref="1">
    <original>L</original>
    <variation>P</variation>
    <location>
        <position position="53"/>
    </location>
</feature>
<feature type="sequence conflict" description="In Ref. 1; AAH07130." evidence="15" ref="1">
    <original>TN</original>
    <variation>AT</variation>
    <location>
        <begin position="59"/>
        <end position="60"/>
    </location>
</feature>
<accession>Q04891</accession>
<accession>Q922L3</accession>
<keyword id="KW-0963">Cytoplasm</keyword>
<keyword id="KW-0221">Differentiation</keyword>
<keyword id="KW-0238">DNA-binding</keyword>
<keyword id="KW-0539">Nucleus</keyword>
<keyword id="KW-0597">Phosphoprotein</keyword>
<keyword id="KW-1185">Reference proteome</keyword>
<keyword id="KW-0678">Repressor</keyword>
<keyword id="KW-0804">Transcription</keyword>
<keyword id="KW-0805">Transcription regulation</keyword>
<reference key="1">
    <citation type="journal article" date="2004" name="Genome Res.">
        <title>The status, quality, and expansion of the NIH full-length cDNA project: the Mammalian Gene Collection (MGC).</title>
        <authorList>
            <consortium name="The MGC Project Team"/>
        </authorList>
    </citation>
    <scope>NUCLEOTIDE SEQUENCE [LARGE SCALE MRNA]</scope>
    <source>
        <tissue>Mammary tumor</tissue>
    </source>
</reference>
<reference key="2">
    <citation type="journal article" date="1998" name="Gene">
        <title>Cloning and characterization of mouse mSox13 cDNA.</title>
        <authorList>
            <person name="Kido S."/>
            <person name="Hiraoka Y."/>
            <person name="Ogawa M."/>
            <person name="Sakai Y."/>
            <person name="Yoshimura Y."/>
            <person name="Aiso S."/>
        </authorList>
    </citation>
    <scope>NUCLEOTIDE SEQUENCE [MRNA] OF 3-613</scope>
    <scope>FUNCTION</scope>
    <scope>TISSUE SPECIFICITY</scope>
    <source>
        <tissue>Embryo</tissue>
    </source>
</reference>
<reference key="3">
    <citation type="journal article" date="1998" name="Nucleic Acids Res.">
        <title>High expression of the HMG box factor sox-13 in arterial walls during embryonic development.</title>
        <authorList>
            <person name="Roose J."/>
            <person name="Korver W."/>
            <person name="Oving E."/>
            <person name="Wilson A."/>
            <person name="Wagenaar G."/>
            <person name="Markman M."/>
            <person name="Lamers W."/>
            <person name="Clevers H."/>
        </authorList>
    </citation>
    <scope>NUCLEOTIDE SEQUENCE [MRNA] OF 19-613</scope>
    <scope>FUNCTION</scope>
    <scope>SUBCELLULAR LOCATION</scope>
    <scope>DEVELOPMENTAL STAGE</scope>
    <source>
        <tissue>Embryo</tissue>
    </source>
</reference>
<reference key="4">
    <citation type="journal article" date="1993" name="Nucleic Acids Res.">
        <title>Seven new members of the Sox gene family expressed during mouse development.</title>
        <authorList>
            <person name="Wright E.M."/>
            <person name="Snopek B."/>
            <person name="Koopman P."/>
        </authorList>
    </citation>
    <scope>NUCLEOTIDE SEQUENCE [MRNA] OF 424-479</scope>
    <source>
        <strain>SWR/J</strain>
        <tissue>Fetus</tissue>
    </source>
</reference>
<reference key="5">
    <citation type="journal article" date="2000" name="Diabetes">
        <title>Sex-determining region Y-related protein SOX13 is a diabetes autoantigen expressed in pancreatic islets.</title>
        <authorList>
            <person name="Kasimiotis H."/>
            <person name="Myers M.A."/>
            <person name="Argentaro A."/>
            <person name="Mertin S."/>
            <person name="Fida S."/>
            <person name="Ferraro T."/>
            <person name="Olsson J."/>
            <person name="Rowley M.J."/>
            <person name="Harley V.R."/>
        </authorList>
    </citation>
    <scope>SUBCELLULAR LOCATION</scope>
    <scope>TISSUE SPECIFICITY</scope>
</reference>
<reference key="6">
    <citation type="journal article" date="2006" name="J. Histochem. Cytochem.">
        <title>SOX13 exhibits a distinct spatial and temporal expression pattern during chondrogenesis, neurogenesis, and limb development.</title>
        <authorList>
            <person name="Wang Y."/>
            <person name="Ristevski S."/>
            <person name="Harley V.R."/>
        </authorList>
    </citation>
    <scope>SUBCELLULAR LOCATION</scope>
    <scope>DEVELOPMENTAL STAGE</scope>
</reference>
<reference key="7">
    <citation type="journal article" date="2007" name="Science">
        <title>Regulation of gammadelta versus alphabeta T lymphocyte differentiation by the transcription factor SOX13.</title>
        <authorList>
            <person name="Melichar H.J."/>
            <person name="Narayan K."/>
            <person name="Der S.D."/>
            <person name="Hiraoka Y."/>
            <person name="Gardiol N."/>
            <person name="Jeannet G."/>
            <person name="Held W."/>
            <person name="Chambers C.A."/>
            <person name="Kang J."/>
        </authorList>
    </citation>
    <scope>FUNCTION</scope>
    <scope>INTERACTION WITH TCF7</scope>
    <scope>TISSUE SPECIFICITY</scope>
    <scope>DISRUPTION PHENOTYPE</scope>
</reference>
<reference key="8">
    <citation type="journal article" date="2010" name="J. Biol. Chem.">
        <title>Interaction between Hhex and SOX13 modulates Wnt/TCF activity.</title>
        <authorList>
            <person name="Marfil V."/>
            <person name="Moya M."/>
            <person name="Pierreux C.E."/>
            <person name="Castell J.V."/>
            <person name="Lemaigre F.P."/>
            <person name="Real F.X."/>
            <person name="Bort R."/>
        </authorList>
    </citation>
    <scope>INTERACTION WITH HHEX</scope>
</reference>
<reference key="9">
    <citation type="journal article" date="2013" name="Immunity">
        <title>A network of high-mobility group box transcription factors programs innate interleukin-17 production.</title>
        <authorList>
            <consortium name="Immunological Genome Project Consortium"/>
            <person name="Malhotra N."/>
            <person name="Narayan K."/>
            <person name="Cho O.H."/>
            <person name="Sylvia K.E."/>
            <person name="Yin C."/>
            <person name="Melichar H."/>
            <person name="Rashighi M."/>
            <person name="Lefebvre V."/>
            <person name="Harris J.E."/>
            <person name="Berg L.J."/>
            <person name="Kang J."/>
        </authorList>
    </citation>
    <scope>FUNCTION</scope>
    <scope>TISSUE SPECIFICITY</scope>
    <scope>DISRUPTION PHENOTYPE</scope>
</reference>
<reference key="10">
    <citation type="journal article" date="2016" name="J. Neurochem.">
        <title>Sox13 functionally complements the related Sox5 and Sox6 as important developmental modulators in mouse spinal cord oligodendrocytes.</title>
        <authorList>
            <person name="Baroti T."/>
            <person name="Schillinger A."/>
            <person name="Wegner M."/>
            <person name="Stolt C.C."/>
        </authorList>
    </citation>
    <scope>FUNCTION</scope>
    <scope>SUBCELLULAR LOCATION</scope>
    <scope>DEVELOPMENTAL STAGE</scope>
    <scope>TISSUE SPECIFICITY</scope>
    <scope>DISRUPTION PHENOTYPE</scope>
</reference>
<reference key="11">
    <citation type="journal article" date="2016" name="PLoS Genet.">
        <title>Comparative Transcriptomic and Epigenomic Analyses Reveal New Regulators of Murine Brown Adipogenesis.</title>
        <authorList>
            <person name="Brunmeir R."/>
            <person name="Wu J."/>
            <person name="Peng X."/>
            <person name="Kim S.Y."/>
            <person name="Julien S.G."/>
            <person name="Zhang Q."/>
            <person name="Xie W."/>
            <person name="Xu F."/>
        </authorList>
    </citation>
    <scope>FUNCTION</scope>
    <scope>DEVELOPMENTAL STAGE</scope>
</reference>
<reference key="12">
    <citation type="journal article" date="2018" name="Immunity">
        <title>Interleukin-17-Producing gammadelta T Cells Originate from SOX13+ Progenitors that Are Independent of gammadeltaTCR Signaling.</title>
        <authorList>
            <person name="Spidale N.A."/>
            <person name="Sylvia K."/>
            <person name="Narayan K."/>
            <person name="Miu B."/>
            <person name="Frascoli M."/>
            <person name="Melichar H.J."/>
            <person name="Zhihao W."/>
            <person name="Kisielow J."/>
            <person name="Palin A."/>
            <person name="Serwold T."/>
            <person name="Love P."/>
            <person name="Kobayashi M."/>
            <person name="Yoshimoto M."/>
            <person name="Jain N."/>
            <person name="Kang J."/>
        </authorList>
    </citation>
    <scope>FUNCTION</scope>
    <scope>DEVELOPMENTAL STAGE</scope>
    <scope>TISSUE SPECIFICITY</scope>
    <scope>DISRUPTION PHENOTYPE</scope>
</reference>
<reference key="13">
    <citation type="journal article" date="2019" name="Biochem. Biophys. Res. Commun.">
        <title>Sox13 is a novel early marker for hair follicle development.</title>
        <authorList>
            <person name="Noto M."/>
            <person name="Noguchi N."/>
            <person name="Ishimura A."/>
            <person name="Kiyonari H."/>
            <person name="Abe T."/>
            <person name="Suzuki T."/>
            <person name="Hasunuma N."/>
            <person name="Taira M."/>
            <person name="Manabe M."/>
            <person name="Osada S.I."/>
        </authorList>
    </citation>
    <scope>DEVELOPMENTAL STAGE</scope>
    <scope>DISRUPTION PHENOTYPE</scope>
</reference>
<protein>
    <recommendedName>
        <fullName>Transcription factor SOX-13</fullName>
    </recommendedName>
    <alternativeName>
        <fullName>SRY (Sex determining region Y)-box 13</fullName>
        <shortName>mSox13</shortName>
    </alternativeName>
</protein>
<proteinExistence type="evidence at protein level"/>
<gene>
    <name type="primary">Sox13</name>
    <name type="synonym">Sox-13</name>
</gene>